<comment type="function">
    <text>Tubulin is the major constituent of microtubules, a cylinder consisting of laterally associated linear protofilaments composed of alpha- and beta-tubulin heterodimers. Microtubules grow by the addition of GTP-tubulin dimers to the microtubule end, where a stabilizing cap forms. Below the cap, tubulin dimers are in GDP-bound state, owing to GTPase activity of alpha-tubulin.</text>
</comment>
<comment type="cofactor">
    <cofactor evidence="1">
        <name>Mg(2+)</name>
        <dbReference type="ChEBI" id="CHEBI:18420"/>
    </cofactor>
</comment>
<comment type="subunit">
    <text>Dimer of alpha and beta chains. A typical microtubule is a hollow water-filled tube with an outer diameter of 25 nm and an inner diameter of 15 nM. Alpha-beta heterodimers associate head-to-tail to form protofilaments running lengthwise along the microtubule wall with the beta-tubulin subunit facing the microtubule plus end conferring a structural polarity. Microtubules usually have 13 protofilaments but different protofilament numbers can be found in some organisms and specialized cells.</text>
</comment>
<comment type="subcellular location">
    <subcellularLocation>
        <location>Cytoplasm</location>
        <location>Cytoskeleton</location>
    </subcellularLocation>
</comment>
<comment type="similarity">
    <text evidence="4">Belongs to the tubulin family.</text>
</comment>
<proteinExistence type="inferred from homology"/>
<dbReference type="EMBL" id="M34492">
    <property type="protein sequence ID" value="AAA33046.1"/>
    <property type="molecule type" value="Genomic_DNA"/>
</dbReference>
<dbReference type="PIR" id="JQ0423">
    <property type="entry name" value="JQ0423"/>
</dbReference>
<dbReference type="SMR" id="P22014"/>
<dbReference type="VEuPathDB" id="FungiDB:GLRG_08786"/>
<dbReference type="GO" id="GO:0005737">
    <property type="term" value="C:cytoplasm"/>
    <property type="evidence" value="ECO:0007669"/>
    <property type="project" value="UniProtKB-KW"/>
</dbReference>
<dbReference type="GO" id="GO:0005874">
    <property type="term" value="C:microtubule"/>
    <property type="evidence" value="ECO:0007669"/>
    <property type="project" value="UniProtKB-KW"/>
</dbReference>
<dbReference type="GO" id="GO:0005525">
    <property type="term" value="F:GTP binding"/>
    <property type="evidence" value="ECO:0007669"/>
    <property type="project" value="UniProtKB-KW"/>
</dbReference>
<dbReference type="GO" id="GO:0003924">
    <property type="term" value="F:GTPase activity"/>
    <property type="evidence" value="ECO:0007669"/>
    <property type="project" value="InterPro"/>
</dbReference>
<dbReference type="GO" id="GO:0046872">
    <property type="term" value="F:metal ion binding"/>
    <property type="evidence" value="ECO:0007669"/>
    <property type="project" value="UniProtKB-KW"/>
</dbReference>
<dbReference type="GO" id="GO:0005200">
    <property type="term" value="F:structural constituent of cytoskeleton"/>
    <property type="evidence" value="ECO:0007669"/>
    <property type="project" value="InterPro"/>
</dbReference>
<dbReference type="GO" id="GO:0007017">
    <property type="term" value="P:microtubule-based process"/>
    <property type="evidence" value="ECO:0007669"/>
    <property type="project" value="InterPro"/>
</dbReference>
<dbReference type="CDD" id="cd02187">
    <property type="entry name" value="beta_tubulin"/>
    <property type="match status" value="1"/>
</dbReference>
<dbReference type="FunFam" id="1.10.287.600:FF:000003">
    <property type="entry name" value="Tubulin beta chain"/>
    <property type="match status" value="1"/>
</dbReference>
<dbReference type="FunFam" id="3.30.1330.20:FF:000002">
    <property type="entry name" value="Tubulin beta chain"/>
    <property type="match status" value="1"/>
</dbReference>
<dbReference type="FunFam" id="3.40.50.1440:FF:000009">
    <property type="entry name" value="Tubulin beta chain"/>
    <property type="match status" value="1"/>
</dbReference>
<dbReference type="Gene3D" id="1.10.287.600">
    <property type="entry name" value="Helix hairpin bin"/>
    <property type="match status" value="1"/>
</dbReference>
<dbReference type="Gene3D" id="3.30.1330.20">
    <property type="entry name" value="Tubulin/FtsZ, C-terminal domain"/>
    <property type="match status" value="1"/>
</dbReference>
<dbReference type="Gene3D" id="3.40.50.1440">
    <property type="entry name" value="Tubulin/FtsZ, GTPase domain"/>
    <property type="match status" value="1"/>
</dbReference>
<dbReference type="InterPro" id="IPR013838">
    <property type="entry name" value="Beta-tubulin_BS"/>
</dbReference>
<dbReference type="InterPro" id="IPR002453">
    <property type="entry name" value="Beta_tubulin"/>
</dbReference>
<dbReference type="InterPro" id="IPR008280">
    <property type="entry name" value="Tub_FtsZ_C"/>
</dbReference>
<dbReference type="InterPro" id="IPR000217">
    <property type="entry name" value="Tubulin"/>
</dbReference>
<dbReference type="InterPro" id="IPR037103">
    <property type="entry name" value="Tubulin/FtsZ-like_C"/>
</dbReference>
<dbReference type="InterPro" id="IPR018316">
    <property type="entry name" value="Tubulin/FtsZ_2-layer-sand-dom"/>
</dbReference>
<dbReference type="InterPro" id="IPR036525">
    <property type="entry name" value="Tubulin/FtsZ_GTPase_sf"/>
</dbReference>
<dbReference type="InterPro" id="IPR023123">
    <property type="entry name" value="Tubulin_C"/>
</dbReference>
<dbReference type="InterPro" id="IPR017975">
    <property type="entry name" value="Tubulin_CS"/>
</dbReference>
<dbReference type="InterPro" id="IPR003008">
    <property type="entry name" value="Tubulin_FtsZ_GTPase"/>
</dbReference>
<dbReference type="PANTHER" id="PTHR11588">
    <property type="entry name" value="TUBULIN"/>
    <property type="match status" value="1"/>
</dbReference>
<dbReference type="Pfam" id="PF00091">
    <property type="entry name" value="Tubulin"/>
    <property type="match status" value="1"/>
</dbReference>
<dbReference type="Pfam" id="PF03953">
    <property type="entry name" value="Tubulin_C"/>
    <property type="match status" value="1"/>
</dbReference>
<dbReference type="PRINTS" id="PR01163">
    <property type="entry name" value="BETATUBULIN"/>
</dbReference>
<dbReference type="PRINTS" id="PR01161">
    <property type="entry name" value="TUBULIN"/>
</dbReference>
<dbReference type="SMART" id="SM00864">
    <property type="entry name" value="Tubulin"/>
    <property type="match status" value="1"/>
</dbReference>
<dbReference type="SMART" id="SM00865">
    <property type="entry name" value="Tubulin_C"/>
    <property type="match status" value="1"/>
</dbReference>
<dbReference type="SUPFAM" id="SSF55307">
    <property type="entry name" value="Tubulin C-terminal domain-like"/>
    <property type="match status" value="1"/>
</dbReference>
<dbReference type="SUPFAM" id="SSF52490">
    <property type="entry name" value="Tubulin nucleotide-binding domain-like"/>
    <property type="match status" value="1"/>
</dbReference>
<dbReference type="PROSITE" id="PS00227">
    <property type="entry name" value="TUBULIN"/>
    <property type="match status" value="1"/>
</dbReference>
<dbReference type="PROSITE" id="PS00228">
    <property type="entry name" value="TUBULIN_B_AUTOREG"/>
    <property type="match status" value="1"/>
</dbReference>
<organism>
    <name type="scientific">Colletotrichum graminicola</name>
    <name type="common">Maize anthracnose fungus</name>
    <name type="synonym">Glomerella graminicola</name>
    <dbReference type="NCBI Taxonomy" id="31870"/>
    <lineage>
        <taxon>Eukaryota</taxon>
        <taxon>Fungi</taxon>
        <taxon>Dikarya</taxon>
        <taxon>Ascomycota</taxon>
        <taxon>Pezizomycotina</taxon>
        <taxon>Sordariomycetes</taxon>
        <taxon>Hypocreomycetidae</taxon>
        <taxon>Glomerellales</taxon>
        <taxon>Glomerellaceae</taxon>
        <taxon>Colletotrichum</taxon>
        <taxon>Colletotrichum graminicola species complex</taxon>
    </lineage>
</organism>
<accession>P22014</accession>
<name>TBB2_COLGR</name>
<evidence type="ECO:0000250" key="1">
    <source>
        <dbReference type="UniProtKB" id="P68363"/>
    </source>
</evidence>
<evidence type="ECO:0000250" key="2">
    <source>
        <dbReference type="UniProtKB" id="Q13509"/>
    </source>
</evidence>
<evidence type="ECO:0000256" key="3">
    <source>
        <dbReference type="SAM" id="MobiDB-lite"/>
    </source>
</evidence>
<evidence type="ECO:0000305" key="4"/>
<sequence length="447" mass="49880">MREIVHLQTGQCGNQIGAAFWQNISGEHGLDSNGVYNGTSELQLERMSVYFNEASGNKYVPRAVLVDLEPGTMDAVRAGPFGQLFRPDNFVFGQSGAGNNWAKGHYTEGAELVDQVLDVVRREAEGCDCLQGFQITHSLGGGTGAGMGTLLISKIREEFPDRMMATFSVVPSPKVSDTVVEPYNATLSVHQLVENSDETFCIDNEALYDICMRTLKLSNPSYGDLNHLVSAVMSGVTTCLRFPGQLNSDLRKLAVNMVPFPRLHFFMVGFAPLTSRGAHSFRAVSVPELTQQMFDPKNMMAASDFRNGRYLTCSAIFRGKVAMKDVEDQMRNVLNKNSSYFVEWIPNNVQTALCSIPPRGLKMSFTFVGNSTAIQELFKRVGEQFTAMFRRKAFLHWYTGEGMDEMEFTEAESNMNDLVSEYQQYQDAGVDEEEEEYEDDAPLEEEV</sequence>
<gene>
    <name type="primary">TUB2</name>
</gene>
<protein>
    <recommendedName>
        <fullName>Tubulin beta-2 chain</fullName>
    </recommendedName>
    <alternativeName>
        <fullName>Beta-2-tubulin</fullName>
    </alternativeName>
</protein>
<reference key="1">
    <citation type="journal article" date="1990" name="Gene">
        <title>Characterization of two divergent beta-tubulin genes from Colletotrichum graminicola.</title>
        <authorList>
            <person name="Panaccione D.G."/>
            <person name="Hanau R.M."/>
        </authorList>
    </citation>
    <scope>NUCLEOTIDE SEQUENCE [GENOMIC DNA]</scope>
</reference>
<keyword id="KW-0963">Cytoplasm</keyword>
<keyword id="KW-0206">Cytoskeleton</keyword>
<keyword id="KW-0342">GTP-binding</keyword>
<keyword id="KW-0460">Magnesium</keyword>
<keyword id="KW-0479">Metal-binding</keyword>
<keyword id="KW-0493">Microtubule</keyword>
<keyword id="KW-0547">Nucleotide-binding</keyword>
<feature type="chain" id="PRO_0000048404" description="Tubulin beta-2 chain">
    <location>
        <begin position="1"/>
        <end position="447"/>
    </location>
</feature>
<feature type="region of interest" description="Disordered" evidence="3">
    <location>
        <begin position="426"/>
        <end position="447"/>
    </location>
</feature>
<feature type="compositionally biased region" description="Acidic residues" evidence="3">
    <location>
        <begin position="429"/>
        <end position="447"/>
    </location>
</feature>
<feature type="binding site" evidence="2">
    <location>
        <position position="11"/>
    </location>
    <ligand>
        <name>GTP</name>
        <dbReference type="ChEBI" id="CHEBI:37565"/>
    </ligand>
</feature>
<feature type="binding site" evidence="1">
    <location>
        <position position="69"/>
    </location>
    <ligand>
        <name>GTP</name>
        <dbReference type="ChEBI" id="CHEBI:37565"/>
    </ligand>
</feature>
<feature type="binding site" evidence="1">
    <location>
        <position position="69"/>
    </location>
    <ligand>
        <name>Mg(2+)</name>
        <dbReference type="ChEBI" id="CHEBI:18420"/>
    </ligand>
</feature>
<feature type="binding site" evidence="2">
    <location>
        <position position="138"/>
    </location>
    <ligand>
        <name>GTP</name>
        <dbReference type="ChEBI" id="CHEBI:37565"/>
    </ligand>
</feature>
<feature type="binding site" evidence="2">
    <location>
        <position position="142"/>
    </location>
    <ligand>
        <name>GTP</name>
        <dbReference type="ChEBI" id="CHEBI:37565"/>
    </ligand>
</feature>
<feature type="binding site" evidence="2">
    <location>
        <position position="143"/>
    </location>
    <ligand>
        <name>GTP</name>
        <dbReference type="ChEBI" id="CHEBI:37565"/>
    </ligand>
</feature>
<feature type="binding site" evidence="2">
    <location>
        <position position="144"/>
    </location>
    <ligand>
        <name>GTP</name>
        <dbReference type="ChEBI" id="CHEBI:37565"/>
    </ligand>
</feature>
<feature type="binding site" evidence="2">
    <location>
        <position position="204"/>
    </location>
    <ligand>
        <name>GTP</name>
        <dbReference type="ChEBI" id="CHEBI:37565"/>
    </ligand>
</feature>
<feature type="binding site" evidence="2">
    <location>
        <position position="226"/>
    </location>
    <ligand>
        <name>GTP</name>
        <dbReference type="ChEBI" id="CHEBI:37565"/>
    </ligand>
</feature>